<name>ATPE_CYAM1</name>
<protein>
    <recommendedName>
        <fullName evidence="1">ATP synthase epsilon chain, chloroplastic</fullName>
    </recommendedName>
    <alternativeName>
        <fullName evidence="1">ATP synthase F1 sector epsilon subunit</fullName>
    </alternativeName>
    <alternativeName>
        <fullName evidence="1">F-ATPase epsilon subunit</fullName>
    </alternativeName>
</protein>
<accession>Q85FT3</accession>
<feature type="chain" id="PRO_0000188262" description="ATP synthase epsilon chain, chloroplastic">
    <location>
        <begin position="1"/>
        <end position="131"/>
    </location>
</feature>
<dbReference type="EMBL" id="AB002583">
    <property type="protein sequence ID" value="BAC76262.1"/>
    <property type="molecule type" value="Genomic_DNA"/>
</dbReference>
<dbReference type="RefSeq" id="NP_849100.1">
    <property type="nucleotide sequence ID" value="NC_004799.1"/>
</dbReference>
<dbReference type="SMR" id="Q85FT3"/>
<dbReference type="STRING" id="280699.Q85FT3"/>
<dbReference type="EnsemblPlants" id="CMV195CT">
    <property type="protein sequence ID" value="CMV195CT"/>
    <property type="gene ID" value="CMV195C"/>
</dbReference>
<dbReference type="GeneID" id="844868"/>
<dbReference type="Gramene" id="CMV195CT">
    <property type="protein sequence ID" value="CMV195CT"/>
    <property type="gene ID" value="CMV195C"/>
</dbReference>
<dbReference type="KEGG" id="cme:CymeCp168"/>
<dbReference type="eggNOG" id="KOG1758">
    <property type="taxonomic scope" value="Eukaryota"/>
</dbReference>
<dbReference type="HOGENOM" id="CLU_084338_1_2_1"/>
<dbReference type="Proteomes" id="UP000007014">
    <property type="component" value="Chloroplast"/>
</dbReference>
<dbReference type="GO" id="GO:0009535">
    <property type="term" value="C:chloroplast thylakoid membrane"/>
    <property type="evidence" value="ECO:0007669"/>
    <property type="project" value="UniProtKB-SubCell"/>
</dbReference>
<dbReference type="GO" id="GO:0045259">
    <property type="term" value="C:proton-transporting ATP synthase complex"/>
    <property type="evidence" value="ECO:0007669"/>
    <property type="project" value="UniProtKB-KW"/>
</dbReference>
<dbReference type="GO" id="GO:0005524">
    <property type="term" value="F:ATP binding"/>
    <property type="evidence" value="ECO:0007669"/>
    <property type="project" value="UniProtKB-UniRule"/>
</dbReference>
<dbReference type="GO" id="GO:0003729">
    <property type="term" value="F:mRNA binding"/>
    <property type="evidence" value="ECO:0007669"/>
    <property type="project" value="EnsemblPlants"/>
</dbReference>
<dbReference type="GO" id="GO:0046933">
    <property type="term" value="F:proton-transporting ATP synthase activity, rotational mechanism"/>
    <property type="evidence" value="ECO:0007669"/>
    <property type="project" value="UniProtKB-UniRule"/>
</dbReference>
<dbReference type="CDD" id="cd12152">
    <property type="entry name" value="F1-ATPase_delta"/>
    <property type="match status" value="1"/>
</dbReference>
<dbReference type="Gene3D" id="2.60.15.10">
    <property type="entry name" value="F0F1 ATP synthase delta/epsilon subunit, N-terminal"/>
    <property type="match status" value="1"/>
</dbReference>
<dbReference type="HAMAP" id="MF_00530">
    <property type="entry name" value="ATP_synth_epsil_bac"/>
    <property type="match status" value="1"/>
</dbReference>
<dbReference type="InterPro" id="IPR001469">
    <property type="entry name" value="ATP_synth_F1_dsu/esu"/>
</dbReference>
<dbReference type="InterPro" id="IPR020546">
    <property type="entry name" value="ATP_synth_F1_dsu/esu_N"/>
</dbReference>
<dbReference type="InterPro" id="IPR036771">
    <property type="entry name" value="ATPsynth_dsu/esu_N"/>
</dbReference>
<dbReference type="NCBIfam" id="TIGR01216">
    <property type="entry name" value="ATP_synt_epsi"/>
    <property type="match status" value="1"/>
</dbReference>
<dbReference type="PANTHER" id="PTHR13822">
    <property type="entry name" value="ATP SYNTHASE DELTA/EPSILON CHAIN"/>
    <property type="match status" value="1"/>
</dbReference>
<dbReference type="PANTHER" id="PTHR13822:SF10">
    <property type="entry name" value="ATP SYNTHASE EPSILON CHAIN, CHLOROPLASTIC"/>
    <property type="match status" value="1"/>
</dbReference>
<dbReference type="Pfam" id="PF02823">
    <property type="entry name" value="ATP-synt_DE_N"/>
    <property type="match status" value="1"/>
</dbReference>
<dbReference type="SUPFAM" id="SSF51344">
    <property type="entry name" value="Epsilon subunit of F1F0-ATP synthase N-terminal domain"/>
    <property type="match status" value="1"/>
</dbReference>
<reference key="1">
    <citation type="journal article" date="2003" name="DNA Res.">
        <title>Complete sequence and analysis of the plastid genome of the unicellular red alga Cyanidioschyzon merolae.</title>
        <authorList>
            <person name="Ohta N."/>
            <person name="Matsuzaki M."/>
            <person name="Misumi O."/>
            <person name="Miyagishima S.-Y."/>
            <person name="Nozaki H."/>
            <person name="Tanaka K."/>
            <person name="Shin-i T."/>
            <person name="Kohara Y."/>
            <person name="Kuroiwa T."/>
        </authorList>
    </citation>
    <scope>NUCLEOTIDE SEQUENCE [LARGE SCALE GENOMIC DNA]</scope>
    <source>
        <strain>NIES-3377 / 10D</strain>
    </source>
</reference>
<keyword id="KW-0066">ATP synthesis</keyword>
<keyword id="KW-0139">CF(1)</keyword>
<keyword id="KW-0150">Chloroplast</keyword>
<keyword id="KW-0375">Hydrogen ion transport</keyword>
<keyword id="KW-0406">Ion transport</keyword>
<keyword id="KW-0472">Membrane</keyword>
<keyword id="KW-0934">Plastid</keyword>
<keyword id="KW-1185">Reference proteome</keyword>
<keyword id="KW-0793">Thylakoid</keyword>
<keyword id="KW-0813">Transport</keyword>
<gene>
    <name evidence="1" type="primary">atpE</name>
</gene>
<proteinExistence type="inferred from homology"/>
<sequence length="131" mass="14433">MKMKIITPDGYVWDREIEEVILPSSTGQLGILAHHAPLLTALDIGVMRAKTAQGWVALVLFGGFAEVLNNQITILVNGAQEAHEIDLQHAQQEEAKALEQLQQAATPTAQIEARQNLAKWRARVQAVSFQI</sequence>
<geneLocation type="chloroplast"/>
<comment type="function">
    <text evidence="1">Produces ATP from ADP in the presence of a proton gradient across the membrane.</text>
</comment>
<comment type="subunit">
    <text evidence="1">F-type ATPases have 2 components, CF(1) - the catalytic core - and CF(0) - the membrane proton channel. CF(1) has five subunits: alpha(3), beta(3), gamma(1), delta(1), epsilon(1). CF(0) has three main subunits: a, b and c.</text>
</comment>
<comment type="subcellular location">
    <subcellularLocation>
        <location evidence="1">Plastid</location>
        <location evidence="1">Chloroplast thylakoid membrane</location>
        <topology evidence="1">Peripheral membrane protein</topology>
    </subcellularLocation>
</comment>
<comment type="similarity">
    <text evidence="1">Belongs to the ATPase epsilon chain family.</text>
</comment>
<organism>
    <name type="scientific">Cyanidioschyzon merolae (strain NIES-3377 / 10D)</name>
    <name type="common">Unicellular red alga</name>
    <dbReference type="NCBI Taxonomy" id="280699"/>
    <lineage>
        <taxon>Eukaryota</taxon>
        <taxon>Rhodophyta</taxon>
        <taxon>Bangiophyceae</taxon>
        <taxon>Cyanidiales</taxon>
        <taxon>Cyanidiaceae</taxon>
        <taxon>Cyanidioschyzon</taxon>
    </lineage>
</organism>
<evidence type="ECO:0000255" key="1">
    <source>
        <dbReference type="HAMAP-Rule" id="MF_00530"/>
    </source>
</evidence>